<accession>B8HQA9</accession>
<dbReference type="EMBL" id="CP001344">
    <property type="protein sequence ID" value="ACL47506.1"/>
    <property type="molecule type" value="Genomic_DNA"/>
</dbReference>
<dbReference type="SMR" id="B8HQA9"/>
<dbReference type="STRING" id="395961.Cyan7425_5213"/>
<dbReference type="KEGG" id="cyn:Cyan7425_5213"/>
<dbReference type="eggNOG" id="COG0556">
    <property type="taxonomic scope" value="Bacteria"/>
</dbReference>
<dbReference type="HOGENOM" id="CLU_009621_2_1_3"/>
<dbReference type="OrthoDB" id="9806651at2"/>
<dbReference type="GO" id="GO:0005737">
    <property type="term" value="C:cytoplasm"/>
    <property type="evidence" value="ECO:0007669"/>
    <property type="project" value="UniProtKB-SubCell"/>
</dbReference>
<dbReference type="GO" id="GO:0009380">
    <property type="term" value="C:excinuclease repair complex"/>
    <property type="evidence" value="ECO:0007669"/>
    <property type="project" value="InterPro"/>
</dbReference>
<dbReference type="GO" id="GO:0005524">
    <property type="term" value="F:ATP binding"/>
    <property type="evidence" value="ECO:0007669"/>
    <property type="project" value="UniProtKB-UniRule"/>
</dbReference>
<dbReference type="GO" id="GO:0016887">
    <property type="term" value="F:ATP hydrolysis activity"/>
    <property type="evidence" value="ECO:0007669"/>
    <property type="project" value="InterPro"/>
</dbReference>
<dbReference type="GO" id="GO:0003677">
    <property type="term" value="F:DNA binding"/>
    <property type="evidence" value="ECO:0007669"/>
    <property type="project" value="UniProtKB-UniRule"/>
</dbReference>
<dbReference type="GO" id="GO:0009381">
    <property type="term" value="F:excinuclease ABC activity"/>
    <property type="evidence" value="ECO:0007669"/>
    <property type="project" value="UniProtKB-UniRule"/>
</dbReference>
<dbReference type="GO" id="GO:0004386">
    <property type="term" value="F:helicase activity"/>
    <property type="evidence" value="ECO:0007669"/>
    <property type="project" value="UniProtKB-KW"/>
</dbReference>
<dbReference type="GO" id="GO:0006289">
    <property type="term" value="P:nucleotide-excision repair"/>
    <property type="evidence" value="ECO:0007669"/>
    <property type="project" value="UniProtKB-UniRule"/>
</dbReference>
<dbReference type="GO" id="GO:0009432">
    <property type="term" value="P:SOS response"/>
    <property type="evidence" value="ECO:0007669"/>
    <property type="project" value="UniProtKB-UniRule"/>
</dbReference>
<dbReference type="CDD" id="cd17916">
    <property type="entry name" value="DEXHc_UvrB"/>
    <property type="match status" value="1"/>
</dbReference>
<dbReference type="CDD" id="cd18790">
    <property type="entry name" value="SF2_C_UvrB"/>
    <property type="match status" value="1"/>
</dbReference>
<dbReference type="Gene3D" id="3.40.50.300">
    <property type="entry name" value="P-loop containing nucleotide triphosphate hydrolases"/>
    <property type="match status" value="3"/>
</dbReference>
<dbReference type="Gene3D" id="4.10.860.10">
    <property type="entry name" value="UVR domain"/>
    <property type="match status" value="1"/>
</dbReference>
<dbReference type="HAMAP" id="MF_00204">
    <property type="entry name" value="UvrB"/>
    <property type="match status" value="1"/>
</dbReference>
<dbReference type="InterPro" id="IPR006935">
    <property type="entry name" value="Helicase/UvrB_N"/>
</dbReference>
<dbReference type="InterPro" id="IPR014001">
    <property type="entry name" value="Helicase_ATP-bd"/>
</dbReference>
<dbReference type="InterPro" id="IPR001650">
    <property type="entry name" value="Helicase_C-like"/>
</dbReference>
<dbReference type="InterPro" id="IPR027417">
    <property type="entry name" value="P-loop_NTPase"/>
</dbReference>
<dbReference type="InterPro" id="IPR001943">
    <property type="entry name" value="UVR_dom"/>
</dbReference>
<dbReference type="InterPro" id="IPR036876">
    <property type="entry name" value="UVR_dom_sf"/>
</dbReference>
<dbReference type="InterPro" id="IPR004807">
    <property type="entry name" value="UvrB"/>
</dbReference>
<dbReference type="InterPro" id="IPR041471">
    <property type="entry name" value="UvrB_inter"/>
</dbReference>
<dbReference type="InterPro" id="IPR024759">
    <property type="entry name" value="UvrB_YAD/RRR_dom"/>
</dbReference>
<dbReference type="NCBIfam" id="NF003673">
    <property type="entry name" value="PRK05298.1"/>
    <property type="match status" value="1"/>
</dbReference>
<dbReference type="NCBIfam" id="TIGR00631">
    <property type="entry name" value="uvrb"/>
    <property type="match status" value="1"/>
</dbReference>
<dbReference type="PANTHER" id="PTHR24029">
    <property type="entry name" value="UVRABC SYSTEM PROTEIN B"/>
    <property type="match status" value="1"/>
</dbReference>
<dbReference type="PANTHER" id="PTHR24029:SF0">
    <property type="entry name" value="UVRABC SYSTEM PROTEIN B"/>
    <property type="match status" value="1"/>
</dbReference>
<dbReference type="Pfam" id="PF00271">
    <property type="entry name" value="Helicase_C"/>
    <property type="match status" value="1"/>
</dbReference>
<dbReference type="Pfam" id="PF04851">
    <property type="entry name" value="ResIII"/>
    <property type="match status" value="1"/>
</dbReference>
<dbReference type="Pfam" id="PF02151">
    <property type="entry name" value="UVR"/>
    <property type="match status" value="1"/>
</dbReference>
<dbReference type="Pfam" id="PF12344">
    <property type="entry name" value="UvrB"/>
    <property type="match status" value="1"/>
</dbReference>
<dbReference type="Pfam" id="PF17757">
    <property type="entry name" value="UvrB_inter"/>
    <property type="match status" value="1"/>
</dbReference>
<dbReference type="SMART" id="SM00487">
    <property type="entry name" value="DEXDc"/>
    <property type="match status" value="1"/>
</dbReference>
<dbReference type="SMART" id="SM00490">
    <property type="entry name" value="HELICc"/>
    <property type="match status" value="1"/>
</dbReference>
<dbReference type="SUPFAM" id="SSF46600">
    <property type="entry name" value="C-terminal UvrC-binding domain of UvrB"/>
    <property type="match status" value="1"/>
</dbReference>
<dbReference type="SUPFAM" id="SSF52540">
    <property type="entry name" value="P-loop containing nucleoside triphosphate hydrolases"/>
    <property type="match status" value="2"/>
</dbReference>
<dbReference type="PROSITE" id="PS51192">
    <property type="entry name" value="HELICASE_ATP_BIND_1"/>
    <property type="match status" value="1"/>
</dbReference>
<dbReference type="PROSITE" id="PS51194">
    <property type="entry name" value="HELICASE_CTER"/>
    <property type="match status" value="1"/>
</dbReference>
<dbReference type="PROSITE" id="PS50151">
    <property type="entry name" value="UVR"/>
    <property type="match status" value="1"/>
</dbReference>
<organism>
    <name type="scientific">Cyanothece sp. (strain PCC 7425 / ATCC 29141)</name>
    <dbReference type="NCBI Taxonomy" id="395961"/>
    <lineage>
        <taxon>Bacteria</taxon>
        <taxon>Bacillati</taxon>
        <taxon>Cyanobacteriota</taxon>
        <taxon>Cyanophyceae</taxon>
        <taxon>Gomontiellales</taxon>
        <taxon>Cyanothecaceae</taxon>
        <taxon>Cyanothece</taxon>
    </lineage>
</organism>
<keyword id="KW-0067">ATP-binding</keyword>
<keyword id="KW-0963">Cytoplasm</keyword>
<keyword id="KW-0227">DNA damage</keyword>
<keyword id="KW-0228">DNA excision</keyword>
<keyword id="KW-0234">DNA repair</keyword>
<keyword id="KW-0267">Excision nuclease</keyword>
<keyword id="KW-0347">Helicase</keyword>
<keyword id="KW-0378">Hydrolase</keyword>
<keyword id="KW-0547">Nucleotide-binding</keyword>
<keyword id="KW-0742">SOS response</keyword>
<reference key="1">
    <citation type="journal article" date="2011" name="MBio">
        <title>Novel metabolic attributes of the genus Cyanothece, comprising a group of unicellular nitrogen-fixing Cyanobacteria.</title>
        <authorList>
            <person name="Bandyopadhyay A."/>
            <person name="Elvitigala T."/>
            <person name="Welsh E."/>
            <person name="Stockel J."/>
            <person name="Liberton M."/>
            <person name="Min H."/>
            <person name="Sherman L.A."/>
            <person name="Pakrasi H.B."/>
        </authorList>
    </citation>
    <scope>NUCLEOTIDE SEQUENCE [LARGE SCALE GENOMIC DNA]</scope>
    <source>
        <strain>PCC 7425 / ATCC 29141</strain>
    </source>
</reference>
<gene>
    <name evidence="1" type="primary">uvrB</name>
    <name type="ordered locus">Cyan7425_5213</name>
</gene>
<proteinExistence type="inferred from homology"/>
<comment type="function">
    <text evidence="1">The UvrABC repair system catalyzes the recognition and processing of DNA lesions. A damage recognition complex composed of 2 UvrA and 2 UvrB subunits scans DNA for abnormalities. Upon binding of the UvrA(2)B(2) complex to a putative damaged site, the DNA wraps around one UvrB monomer. DNA wrap is dependent on ATP binding by UvrB and probably causes local melting of the DNA helix, facilitating insertion of UvrB beta-hairpin between the DNA strands. Then UvrB probes one DNA strand for the presence of a lesion. If a lesion is found the UvrA subunits dissociate and the UvrB-DNA preincision complex is formed. This complex is subsequently bound by UvrC and the second UvrB is released. If no lesion is found, the DNA wraps around the other UvrB subunit that will check the other stand for damage.</text>
</comment>
<comment type="subunit">
    <text evidence="1">Forms a heterotetramer with UvrA during the search for lesions. Interacts with UvrC in an incision complex.</text>
</comment>
<comment type="subcellular location">
    <subcellularLocation>
        <location evidence="1">Cytoplasm</location>
    </subcellularLocation>
</comment>
<comment type="domain">
    <text evidence="1">The beta-hairpin motif is involved in DNA binding.</text>
</comment>
<comment type="similarity">
    <text evidence="1">Belongs to the UvrB family.</text>
</comment>
<evidence type="ECO:0000255" key="1">
    <source>
        <dbReference type="HAMAP-Rule" id="MF_00204"/>
    </source>
</evidence>
<sequence length="665" mass="75824">MTGFQIKAPFEPTGDQPRAIAQLTASLQAEHRFQTLLGATGTGKTHTIARVIEKIGKPTLVLAHNKTLAAQLCNELREFFPNNAVEYFISYYDYYQPEAYIPVTDTYIEKTAAINEEIDMLRHSATRSLFERKDVIVVASISCIYGLGIPSEYLNASVPLQVGIEVDQRQLLRDLTTIQYSRNDLDLGRGRFRVKGDVLEIGPAYEDRIVRVEFFGDEIDAIRYVDPVTGTTLQSLDNLRIYPARHFVTPQERLEIACADIAAELKDRLTELEAQNKLLEAQRLDQRTRYDLEMLREVGYCNGVENYSRHLAGRSPGEPPETLIDYFPKDWLLVVDESHVTVPQIRGMYNGDQSRKRVLIDHGFRLPSAADNRPLKSEEFWQKVTQCIFVSATPGDWELDISEDRIIEQIIRPTGVVDPEIFVRPTTGQVDDLLGEVRDRIERRERVLITTLTKRMAEDLTEYFQDRGVRVRYLHSEIGAIERIEILEDLRKGTFDVLIGVNLLREGLDLPEVSLVAILDADKEGFLRAERSLIQTIGRAARHVRGQAILYADNLTDSMAKAISETERRRAIQTAYNQKHGITPQPIVKKASNAILAFLEVSRRLNAQELDTAYEQADELPLEDIPELITQLEAQMKEAAKKLEFEEAAKYRDRIKQLRDKLLGR</sequence>
<feature type="chain" id="PRO_1000200538" description="UvrABC system protein B">
    <location>
        <begin position="1"/>
        <end position="665"/>
    </location>
</feature>
<feature type="domain" description="Helicase ATP-binding" evidence="1">
    <location>
        <begin position="25"/>
        <end position="178"/>
    </location>
</feature>
<feature type="domain" description="Helicase C-terminal" evidence="1">
    <location>
        <begin position="429"/>
        <end position="595"/>
    </location>
</feature>
<feature type="domain" description="UVR" evidence="1">
    <location>
        <begin position="626"/>
        <end position="661"/>
    </location>
</feature>
<feature type="short sequence motif" description="Beta-hairpin">
    <location>
        <begin position="91"/>
        <end position="114"/>
    </location>
</feature>
<feature type="binding site" evidence="1">
    <location>
        <begin position="38"/>
        <end position="45"/>
    </location>
    <ligand>
        <name>ATP</name>
        <dbReference type="ChEBI" id="CHEBI:30616"/>
    </ligand>
</feature>
<protein>
    <recommendedName>
        <fullName evidence="1">UvrABC system protein B</fullName>
        <shortName evidence="1">Protein UvrB</shortName>
    </recommendedName>
    <alternativeName>
        <fullName evidence="1">Excinuclease ABC subunit B</fullName>
    </alternativeName>
</protein>
<name>UVRB_CYAP4</name>